<evidence type="ECO:0000255" key="1">
    <source>
        <dbReference type="HAMAP-Rule" id="MF_00415"/>
    </source>
</evidence>
<proteinExistence type="inferred from homology"/>
<protein>
    <recommendedName>
        <fullName evidence="1">Flagellar L-ring protein</fullName>
    </recommendedName>
    <alternativeName>
        <fullName evidence="1">Basal body L-ring protein</fullName>
    </alternativeName>
</protein>
<keyword id="KW-0975">Bacterial flagellum</keyword>
<keyword id="KW-0998">Cell outer membrane</keyword>
<keyword id="KW-0449">Lipoprotein</keyword>
<keyword id="KW-0472">Membrane</keyword>
<keyword id="KW-0564">Palmitate</keyword>
<keyword id="KW-0732">Signal</keyword>
<reference key="1">
    <citation type="journal article" date="2010" name="Genome Biol. Evol.">
        <title>Continuing evolution of Burkholderia mallei through genome reduction and large-scale rearrangements.</title>
        <authorList>
            <person name="Losada L."/>
            <person name="Ronning C.M."/>
            <person name="DeShazer D."/>
            <person name="Woods D."/>
            <person name="Fedorova N."/>
            <person name="Kim H.S."/>
            <person name="Shabalina S.A."/>
            <person name="Pearson T.R."/>
            <person name="Brinkac L."/>
            <person name="Tan P."/>
            <person name="Nandi T."/>
            <person name="Crabtree J."/>
            <person name="Badger J."/>
            <person name="Beckstrom-Sternberg S."/>
            <person name="Saqib M."/>
            <person name="Schutzer S.E."/>
            <person name="Keim P."/>
            <person name="Nierman W.C."/>
        </authorList>
    </citation>
    <scope>NUCLEOTIDE SEQUENCE [LARGE SCALE GENOMIC DNA]</scope>
    <source>
        <strain>1710b</strain>
    </source>
</reference>
<comment type="function">
    <text evidence="1">Assembles around the rod to form the L-ring and probably protects the motor/basal body from shearing forces during rotation.</text>
</comment>
<comment type="subunit">
    <text evidence="1">The basal body constitutes a major portion of the flagellar organelle and consists of four rings (L,P,S, and M) mounted on a central rod.</text>
</comment>
<comment type="subcellular location">
    <subcellularLocation>
        <location evidence="1">Cell outer membrane</location>
        <topology evidence="1">Lipid-anchor</topology>
    </subcellularLocation>
    <subcellularLocation>
        <location evidence="1">Bacterial flagellum basal body</location>
    </subcellularLocation>
</comment>
<comment type="similarity">
    <text evidence="1">Belongs to the FlgH family.</text>
</comment>
<feature type="signal peptide" evidence="1">
    <location>
        <begin position="1"/>
        <end position="18"/>
    </location>
</feature>
<feature type="chain" id="PRO_0000236816" description="Flagellar L-ring protein">
    <location>
        <begin position="19"/>
        <end position="222"/>
    </location>
</feature>
<feature type="lipid moiety-binding region" description="N-palmitoyl cysteine" evidence="1">
    <location>
        <position position="19"/>
    </location>
</feature>
<feature type="lipid moiety-binding region" description="S-diacylglycerol cysteine" evidence="1">
    <location>
        <position position="19"/>
    </location>
</feature>
<dbReference type="EMBL" id="CP000124">
    <property type="protein sequence ID" value="ABA49653.1"/>
    <property type="molecule type" value="Genomic_DNA"/>
</dbReference>
<dbReference type="SMR" id="Q3JX21"/>
<dbReference type="EnsemblBacteria" id="ABA49653">
    <property type="protein sequence ID" value="ABA49653"/>
    <property type="gene ID" value="BURPS1710b_0468"/>
</dbReference>
<dbReference type="KEGG" id="bpm:BURPS1710b_0468"/>
<dbReference type="HOGENOM" id="CLU_069313_0_0_4"/>
<dbReference type="Proteomes" id="UP000002700">
    <property type="component" value="Chromosome I"/>
</dbReference>
<dbReference type="GO" id="GO:0009427">
    <property type="term" value="C:bacterial-type flagellum basal body, distal rod, L ring"/>
    <property type="evidence" value="ECO:0007669"/>
    <property type="project" value="InterPro"/>
</dbReference>
<dbReference type="GO" id="GO:0009279">
    <property type="term" value="C:cell outer membrane"/>
    <property type="evidence" value="ECO:0007669"/>
    <property type="project" value="UniProtKB-SubCell"/>
</dbReference>
<dbReference type="GO" id="GO:0003774">
    <property type="term" value="F:cytoskeletal motor activity"/>
    <property type="evidence" value="ECO:0007669"/>
    <property type="project" value="InterPro"/>
</dbReference>
<dbReference type="GO" id="GO:0071973">
    <property type="term" value="P:bacterial-type flagellum-dependent cell motility"/>
    <property type="evidence" value="ECO:0007669"/>
    <property type="project" value="InterPro"/>
</dbReference>
<dbReference type="HAMAP" id="MF_00415">
    <property type="entry name" value="FlgH"/>
    <property type="match status" value="1"/>
</dbReference>
<dbReference type="InterPro" id="IPR000527">
    <property type="entry name" value="Flag_Lring"/>
</dbReference>
<dbReference type="NCBIfam" id="NF009337">
    <property type="entry name" value="PRK12697.1"/>
    <property type="match status" value="1"/>
</dbReference>
<dbReference type="PANTHER" id="PTHR34933">
    <property type="entry name" value="FLAGELLAR L-RING PROTEIN"/>
    <property type="match status" value="1"/>
</dbReference>
<dbReference type="PANTHER" id="PTHR34933:SF3">
    <property type="entry name" value="FLAGELLAR L-RING PROTEIN"/>
    <property type="match status" value="1"/>
</dbReference>
<dbReference type="Pfam" id="PF02107">
    <property type="entry name" value="FlgH"/>
    <property type="match status" value="1"/>
</dbReference>
<dbReference type="PRINTS" id="PR01008">
    <property type="entry name" value="FLGLRINGFLGH"/>
</dbReference>
<dbReference type="PROSITE" id="PS51257">
    <property type="entry name" value="PROKAR_LIPOPROTEIN"/>
    <property type="match status" value="1"/>
</dbReference>
<sequence>MRRPGAAALAAAALALAGCAQIPREPITQQPMSAMPPMPPAMQAPGSIYNPGYAGRPLFEDQRPRNVGDILTIVIAENINATKSSGANTNRQGNTSFDVPTAGFLGGLFNKANLSAQGANKFAATGGASAANTFNGTITVTVTNVLPNGNLVVSGEKQMLINQGNEFVRFSGIVNPNTISGQNSVYSTQVADARIEYSAKGYINEAETMGWLQRFFLNIAPW</sequence>
<accession>Q3JX21</accession>
<gene>
    <name evidence="1" type="primary">flgH</name>
    <name type="ordered locus">BURPS1710b_0468</name>
</gene>
<name>FLGH_BURP1</name>
<organism>
    <name type="scientific">Burkholderia pseudomallei (strain 1710b)</name>
    <dbReference type="NCBI Taxonomy" id="320372"/>
    <lineage>
        <taxon>Bacteria</taxon>
        <taxon>Pseudomonadati</taxon>
        <taxon>Pseudomonadota</taxon>
        <taxon>Betaproteobacteria</taxon>
        <taxon>Burkholderiales</taxon>
        <taxon>Burkholderiaceae</taxon>
        <taxon>Burkholderia</taxon>
        <taxon>pseudomallei group</taxon>
    </lineage>
</organism>